<name>TGT_STRA1</name>
<comment type="function">
    <text evidence="1">Catalyzes the base-exchange of a guanine (G) residue with the queuine precursor 7-aminomethyl-7-deazaguanine (PreQ1) at position 34 (anticodon wobble position) in tRNAs with GU(N) anticodons (tRNA-Asp, -Asn, -His and -Tyr). Catalysis occurs through a double-displacement mechanism. The nucleophile active site attacks the C1' of nucleotide 34 to detach the guanine base from the RNA, forming a covalent enzyme-RNA intermediate. The proton acceptor active site deprotonates the incoming PreQ1, allowing a nucleophilic attack on the C1' of the ribose to form the product. After dissociation, two additional enzymatic reactions on the tRNA convert PreQ1 to queuine (Q), resulting in the hypermodified nucleoside queuosine (7-(((4,5-cis-dihydroxy-2-cyclopenten-1-yl)amino)methyl)-7-deazaguanosine).</text>
</comment>
<comment type="catalytic activity">
    <reaction evidence="1">
        <text>7-aminomethyl-7-carbaguanine + guanosine(34) in tRNA = 7-aminomethyl-7-carbaguanosine(34) in tRNA + guanine</text>
        <dbReference type="Rhea" id="RHEA:24104"/>
        <dbReference type="Rhea" id="RHEA-COMP:10341"/>
        <dbReference type="Rhea" id="RHEA-COMP:10342"/>
        <dbReference type="ChEBI" id="CHEBI:16235"/>
        <dbReference type="ChEBI" id="CHEBI:58703"/>
        <dbReference type="ChEBI" id="CHEBI:74269"/>
        <dbReference type="ChEBI" id="CHEBI:82833"/>
        <dbReference type="EC" id="2.4.2.29"/>
    </reaction>
</comment>
<comment type="cofactor">
    <cofactor evidence="1">
        <name>Zn(2+)</name>
        <dbReference type="ChEBI" id="CHEBI:29105"/>
    </cofactor>
    <text evidence="1">Binds 1 zinc ion per subunit.</text>
</comment>
<comment type="pathway">
    <text evidence="1">tRNA modification; tRNA-queuosine biosynthesis.</text>
</comment>
<comment type="subunit">
    <text evidence="1">Homodimer. Within each dimer, one monomer is responsible for RNA recognition and catalysis, while the other monomer binds to the replacement base PreQ1.</text>
</comment>
<comment type="similarity">
    <text evidence="1">Belongs to the queuine tRNA-ribosyltransferase family.</text>
</comment>
<keyword id="KW-0328">Glycosyltransferase</keyword>
<keyword id="KW-0479">Metal-binding</keyword>
<keyword id="KW-0671">Queuosine biosynthesis</keyword>
<keyword id="KW-0808">Transferase</keyword>
<keyword id="KW-0819">tRNA processing</keyword>
<keyword id="KW-0862">Zinc</keyword>
<dbReference type="EC" id="2.4.2.29" evidence="1"/>
<dbReference type="EMBL" id="CP000114">
    <property type="protein sequence ID" value="ABA44685.1"/>
    <property type="molecule type" value="Genomic_DNA"/>
</dbReference>
<dbReference type="RefSeq" id="WP_000129510.1">
    <property type="nucleotide sequence ID" value="NC_007432.1"/>
</dbReference>
<dbReference type="SMR" id="Q3K2Y7"/>
<dbReference type="KEGG" id="sak:SAK_0470"/>
<dbReference type="HOGENOM" id="CLU_022060_0_1_9"/>
<dbReference type="UniPathway" id="UPA00392"/>
<dbReference type="GO" id="GO:0005829">
    <property type="term" value="C:cytosol"/>
    <property type="evidence" value="ECO:0007669"/>
    <property type="project" value="TreeGrafter"/>
</dbReference>
<dbReference type="GO" id="GO:0046872">
    <property type="term" value="F:metal ion binding"/>
    <property type="evidence" value="ECO:0007669"/>
    <property type="project" value="UniProtKB-KW"/>
</dbReference>
<dbReference type="GO" id="GO:0008479">
    <property type="term" value="F:tRNA-guanosine(34) queuine transglycosylase activity"/>
    <property type="evidence" value="ECO:0007669"/>
    <property type="project" value="UniProtKB-UniRule"/>
</dbReference>
<dbReference type="GO" id="GO:0008616">
    <property type="term" value="P:queuosine biosynthetic process"/>
    <property type="evidence" value="ECO:0007669"/>
    <property type="project" value="UniProtKB-UniRule"/>
</dbReference>
<dbReference type="GO" id="GO:0002099">
    <property type="term" value="P:tRNA wobble guanine modification"/>
    <property type="evidence" value="ECO:0007669"/>
    <property type="project" value="TreeGrafter"/>
</dbReference>
<dbReference type="GO" id="GO:0101030">
    <property type="term" value="P:tRNA-guanine transglycosylation"/>
    <property type="evidence" value="ECO:0007669"/>
    <property type="project" value="InterPro"/>
</dbReference>
<dbReference type="FunFam" id="3.20.20.105:FF:000001">
    <property type="entry name" value="Queuine tRNA-ribosyltransferase"/>
    <property type="match status" value="1"/>
</dbReference>
<dbReference type="Gene3D" id="3.20.20.105">
    <property type="entry name" value="Queuine tRNA-ribosyltransferase-like"/>
    <property type="match status" value="1"/>
</dbReference>
<dbReference type="HAMAP" id="MF_00168">
    <property type="entry name" value="Q_tRNA_Tgt"/>
    <property type="match status" value="1"/>
</dbReference>
<dbReference type="InterPro" id="IPR050076">
    <property type="entry name" value="ArchSynthase1/Queuine_TRR"/>
</dbReference>
<dbReference type="InterPro" id="IPR004803">
    <property type="entry name" value="TGT"/>
</dbReference>
<dbReference type="InterPro" id="IPR036511">
    <property type="entry name" value="TGT-like_sf"/>
</dbReference>
<dbReference type="InterPro" id="IPR002616">
    <property type="entry name" value="tRNA_ribo_trans-like"/>
</dbReference>
<dbReference type="NCBIfam" id="TIGR00430">
    <property type="entry name" value="Q_tRNA_tgt"/>
    <property type="match status" value="1"/>
</dbReference>
<dbReference type="NCBIfam" id="TIGR00449">
    <property type="entry name" value="tgt_general"/>
    <property type="match status" value="1"/>
</dbReference>
<dbReference type="PANTHER" id="PTHR46499">
    <property type="entry name" value="QUEUINE TRNA-RIBOSYLTRANSFERASE"/>
    <property type="match status" value="1"/>
</dbReference>
<dbReference type="PANTHER" id="PTHR46499:SF1">
    <property type="entry name" value="QUEUINE TRNA-RIBOSYLTRANSFERASE"/>
    <property type="match status" value="1"/>
</dbReference>
<dbReference type="Pfam" id="PF01702">
    <property type="entry name" value="TGT"/>
    <property type="match status" value="1"/>
</dbReference>
<dbReference type="SUPFAM" id="SSF51713">
    <property type="entry name" value="tRNA-guanine transglycosylase"/>
    <property type="match status" value="1"/>
</dbReference>
<reference key="1">
    <citation type="journal article" date="2005" name="Proc. Natl. Acad. Sci. U.S.A.">
        <title>Genome analysis of multiple pathogenic isolates of Streptococcus agalactiae: implications for the microbial 'pan-genome'.</title>
        <authorList>
            <person name="Tettelin H."/>
            <person name="Masignani V."/>
            <person name="Cieslewicz M.J."/>
            <person name="Donati C."/>
            <person name="Medini D."/>
            <person name="Ward N.L."/>
            <person name="Angiuoli S.V."/>
            <person name="Crabtree J."/>
            <person name="Jones A.L."/>
            <person name="Durkin A.S."/>
            <person name="DeBoy R.T."/>
            <person name="Davidsen T.M."/>
            <person name="Mora M."/>
            <person name="Scarselli M."/>
            <person name="Margarit y Ros I."/>
            <person name="Peterson J.D."/>
            <person name="Hauser C.R."/>
            <person name="Sundaram J.P."/>
            <person name="Nelson W.C."/>
            <person name="Madupu R."/>
            <person name="Brinkac L.M."/>
            <person name="Dodson R.J."/>
            <person name="Rosovitz M.J."/>
            <person name="Sullivan S.A."/>
            <person name="Daugherty S.C."/>
            <person name="Haft D.H."/>
            <person name="Selengut J."/>
            <person name="Gwinn M.L."/>
            <person name="Zhou L."/>
            <person name="Zafar N."/>
            <person name="Khouri H."/>
            <person name="Radune D."/>
            <person name="Dimitrov G."/>
            <person name="Watkins K."/>
            <person name="O'Connor K.J."/>
            <person name="Smith S."/>
            <person name="Utterback T.R."/>
            <person name="White O."/>
            <person name="Rubens C.E."/>
            <person name="Grandi G."/>
            <person name="Madoff L.C."/>
            <person name="Kasper D.L."/>
            <person name="Telford J.L."/>
            <person name="Wessels M.R."/>
            <person name="Rappuoli R."/>
            <person name="Fraser C.M."/>
        </authorList>
    </citation>
    <scope>NUCLEOTIDE SEQUENCE [LARGE SCALE GENOMIC DNA]</scope>
    <source>
        <strain>ATCC 27591 / A909 / CDC SS700</strain>
    </source>
</reference>
<accession>Q3K2Y7</accession>
<sequence>MTDHPIKYRLIKQEKHTGARLGEIITPHGTFPTPMFMPVGTQATVKTQSPEELKEMGSGIILSNTYHLWLRPGDELIAKAGGLHKFMNWDQAILTDSGGFQVYSLADSRNITEEGVTFKNHLNGAKMFLSPEKAISIQNNLGSDIMMSFDECPQFYQPYDYVKKSIERTSRWAERGLNAHRRPHDQGLFGIVQGAGFEDLRRQSARDLVSMDFPGYSIGGLAVGETHDEMNAVLDFTVPMLPNDKPRYLMGVGAPDSLIDAVIRGVDMFDCVLPTRIARNGTCMTSQGRLVVKNAKFAEDFTPLDPNCDCYTCKNYTRAYIRHLLKADETFGIRLTSYHNLYFLVNLMKDVRQAIMDDNLLEFRQDFMERYGYGMNNRNF</sequence>
<protein>
    <recommendedName>
        <fullName evidence="1">Queuine tRNA-ribosyltransferase</fullName>
        <ecNumber evidence="1">2.4.2.29</ecNumber>
    </recommendedName>
    <alternativeName>
        <fullName evidence="1">Guanine insertion enzyme</fullName>
    </alternativeName>
    <alternativeName>
        <fullName evidence="1">tRNA-guanine transglycosylase</fullName>
    </alternativeName>
</protein>
<proteinExistence type="inferred from homology"/>
<organism>
    <name type="scientific">Streptococcus agalactiae serotype Ia (strain ATCC 27591 / A909 / CDC SS700)</name>
    <dbReference type="NCBI Taxonomy" id="205921"/>
    <lineage>
        <taxon>Bacteria</taxon>
        <taxon>Bacillati</taxon>
        <taxon>Bacillota</taxon>
        <taxon>Bacilli</taxon>
        <taxon>Lactobacillales</taxon>
        <taxon>Streptococcaceae</taxon>
        <taxon>Streptococcus</taxon>
    </lineage>
</organism>
<evidence type="ECO:0000255" key="1">
    <source>
        <dbReference type="HAMAP-Rule" id="MF_00168"/>
    </source>
</evidence>
<gene>
    <name evidence="1" type="primary">tgt</name>
    <name type="ordered locus">SAK_0470</name>
</gene>
<feature type="chain" id="PRO_1000016866" description="Queuine tRNA-ribosyltransferase">
    <location>
        <begin position="1"/>
        <end position="380"/>
    </location>
</feature>
<feature type="region of interest" description="RNA binding" evidence="1">
    <location>
        <begin position="251"/>
        <end position="257"/>
    </location>
</feature>
<feature type="region of interest" description="RNA binding; important for wobble base 34 recognition" evidence="1">
    <location>
        <begin position="275"/>
        <end position="279"/>
    </location>
</feature>
<feature type="active site" description="Proton acceptor" evidence="1">
    <location>
        <position position="96"/>
    </location>
</feature>
<feature type="active site" description="Nucleophile" evidence="1">
    <location>
        <position position="270"/>
    </location>
</feature>
<feature type="binding site" evidence="1">
    <location>
        <begin position="96"/>
        <end position="100"/>
    </location>
    <ligand>
        <name>substrate</name>
    </ligand>
</feature>
<feature type="binding site" evidence="1">
    <location>
        <position position="150"/>
    </location>
    <ligand>
        <name>substrate</name>
    </ligand>
</feature>
<feature type="binding site" evidence="1">
    <location>
        <position position="193"/>
    </location>
    <ligand>
        <name>substrate</name>
    </ligand>
</feature>
<feature type="binding site" evidence="1">
    <location>
        <position position="220"/>
    </location>
    <ligand>
        <name>substrate</name>
    </ligand>
</feature>
<feature type="binding site" evidence="1">
    <location>
        <position position="308"/>
    </location>
    <ligand>
        <name>Zn(2+)</name>
        <dbReference type="ChEBI" id="CHEBI:29105"/>
    </ligand>
</feature>
<feature type="binding site" evidence="1">
    <location>
        <position position="310"/>
    </location>
    <ligand>
        <name>Zn(2+)</name>
        <dbReference type="ChEBI" id="CHEBI:29105"/>
    </ligand>
</feature>
<feature type="binding site" evidence="1">
    <location>
        <position position="313"/>
    </location>
    <ligand>
        <name>Zn(2+)</name>
        <dbReference type="ChEBI" id="CHEBI:29105"/>
    </ligand>
</feature>
<feature type="binding site" evidence="1">
    <location>
        <position position="339"/>
    </location>
    <ligand>
        <name>Zn(2+)</name>
        <dbReference type="ChEBI" id="CHEBI:29105"/>
    </ligand>
</feature>